<reference key="1">
    <citation type="submission" date="2009-06" db="EMBL/GenBank/DDBJ databases">
        <title>Complete sequence of Desulfovibrio salexigens DSM 2638.</title>
        <authorList>
            <consortium name="US DOE Joint Genome Institute"/>
            <person name="Lucas S."/>
            <person name="Copeland A."/>
            <person name="Lapidus A."/>
            <person name="Glavina del Rio T."/>
            <person name="Tice H."/>
            <person name="Bruce D."/>
            <person name="Goodwin L."/>
            <person name="Pitluck S."/>
            <person name="Munk A.C."/>
            <person name="Brettin T."/>
            <person name="Detter J.C."/>
            <person name="Han C."/>
            <person name="Tapia R."/>
            <person name="Larimer F."/>
            <person name="Land M."/>
            <person name="Hauser L."/>
            <person name="Kyrpides N."/>
            <person name="Anderson I."/>
            <person name="Wall J.D."/>
            <person name="Arkin A.P."/>
            <person name="Dehal P."/>
            <person name="Chivian D."/>
            <person name="Giles B."/>
            <person name="Hazen T.C."/>
        </authorList>
    </citation>
    <scope>NUCLEOTIDE SEQUENCE [LARGE SCALE GENOMIC DNA]</scope>
    <source>
        <strain>ATCC 14822 / DSM 2638 / NCIMB 8403 / VKM B-1763</strain>
    </source>
</reference>
<organism>
    <name type="scientific">Maridesulfovibrio salexigens (strain ATCC 14822 / DSM 2638 / NCIMB 8403 / VKM B-1763)</name>
    <name type="common">Desulfovibrio salexigens</name>
    <dbReference type="NCBI Taxonomy" id="526222"/>
    <lineage>
        <taxon>Bacteria</taxon>
        <taxon>Pseudomonadati</taxon>
        <taxon>Thermodesulfobacteriota</taxon>
        <taxon>Desulfovibrionia</taxon>
        <taxon>Desulfovibrionales</taxon>
        <taxon>Desulfovibrionaceae</taxon>
        <taxon>Maridesulfovibrio</taxon>
    </lineage>
</organism>
<dbReference type="EC" id="2.1.1.177" evidence="1"/>
<dbReference type="EMBL" id="CP001649">
    <property type="protein sequence ID" value="ACS81762.1"/>
    <property type="molecule type" value="Genomic_DNA"/>
</dbReference>
<dbReference type="RefSeq" id="WP_015853578.1">
    <property type="nucleotide sequence ID" value="NC_012881.1"/>
</dbReference>
<dbReference type="SMR" id="C6BU53"/>
<dbReference type="STRING" id="526222.Desal_3717"/>
<dbReference type="KEGG" id="dsa:Desal_3717"/>
<dbReference type="eggNOG" id="COG1576">
    <property type="taxonomic scope" value="Bacteria"/>
</dbReference>
<dbReference type="HOGENOM" id="CLU_100552_1_0_7"/>
<dbReference type="OrthoDB" id="9806643at2"/>
<dbReference type="Proteomes" id="UP000002601">
    <property type="component" value="Chromosome"/>
</dbReference>
<dbReference type="GO" id="GO:0005737">
    <property type="term" value="C:cytoplasm"/>
    <property type="evidence" value="ECO:0007669"/>
    <property type="project" value="UniProtKB-SubCell"/>
</dbReference>
<dbReference type="GO" id="GO:0070038">
    <property type="term" value="F:rRNA (pseudouridine-N3-)-methyltransferase activity"/>
    <property type="evidence" value="ECO:0007669"/>
    <property type="project" value="UniProtKB-UniRule"/>
</dbReference>
<dbReference type="CDD" id="cd18081">
    <property type="entry name" value="RlmH-like"/>
    <property type="match status" value="1"/>
</dbReference>
<dbReference type="Gene3D" id="3.40.1280.10">
    <property type="match status" value="1"/>
</dbReference>
<dbReference type="HAMAP" id="MF_00658">
    <property type="entry name" value="23SrRNA_methyltr_H"/>
    <property type="match status" value="1"/>
</dbReference>
<dbReference type="InterPro" id="IPR029028">
    <property type="entry name" value="Alpha/beta_knot_MTases"/>
</dbReference>
<dbReference type="InterPro" id="IPR003742">
    <property type="entry name" value="RlmH-like"/>
</dbReference>
<dbReference type="InterPro" id="IPR029026">
    <property type="entry name" value="tRNA_m1G_MTases_N"/>
</dbReference>
<dbReference type="PANTHER" id="PTHR33603">
    <property type="entry name" value="METHYLTRANSFERASE"/>
    <property type="match status" value="1"/>
</dbReference>
<dbReference type="PANTHER" id="PTHR33603:SF1">
    <property type="entry name" value="RIBOSOMAL RNA LARGE SUBUNIT METHYLTRANSFERASE H"/>
    <property type="match status" value="1"/>
</dbReference>
<dbReference type="Pfam" id="PF02590">
    <property type="entry name" value="SPOUT_MTase"/>
    <property type="match status" value="1"/>
</dbReference>
<dbReference type="PIRSF" id="PIRSF004505">
    <property type="entry name" value="MT_bac"/>
    <property type="match status" value="1"/>
</dbReference>
<dbReference type="SUPFAM" id="SSF75217">
    <property type="entry name" value="alpha/beta knot"/>
    <property type="match status" value="1"/>
</dbReference>
<accession>C6BU53</accession>
<gene>
    <name evidence="1" type="primary">rlmH</name>
    <name type="ordered locus">Desal_3717</name>
</gene>
<feature type="chain" id="PRO_1000212448" description="Ribosomal RNA large subunit methyltransferase H">
    <location>
        <begin position="1"/>
        <end position="156"/>
    </location>
</feature>
<feature type="binding site" evidence="1">
    <location>
        <position position="72"/>
    </location>
    <ligand>
        <name>S-adenosyl-L-methionine</name>
        <dbReference type="ChEBI" id="CHEBI:59789"/>
    </ligand>
</feature>
<feature type="binding site" evidence="1">
    <location>
        <position position="104"/>
    </location>
    <ligand>
        <name>S-adenosyl-L-methionine</name>
        <dbReference type="ChEBI" id="CHEBI:59789"/>
    </ligand>
</feature>
<feature type="binding site" evidence="1">
    <location>
        <begin position="123"/>
        <end position="128"/>
    </location>
    <ligand>
        <name>S-adenosyl-L-methionine</name>
        <dbReference type="ChEBI" id="CHEBI:59789"/>
    </ligand>
</feature>
<comment type="function">
    <text evidence="1">Specifically methylates the pseudouridine at position 1915 (m3Psi1915) in 23S rRNA.</text>
</comment>
<comment type="catalytic activity">
    <reaction evidence="1">
        <text>pseudouridine(1915) in 23S rRNA + S-adenosyl-L-methionine = N(3)-methylpseudouridine(1915) in 23S rRNA + S-adenosyl-L-homocysteine + H(+)</text>
        <dbReference type="Rhea" id="RHEA:42752"/>
        <dbReference type="Rhea" id="RHEA-COMP:10221"/>
        <dbReference type="Rhea" id="RHEA-COMP:10222"/>
        <dbReference type="ChEBI" id="CHEBI:15378"/>
        <dbReference type="ChEBI" id="CHEBI:57856"/>
        <dbReference type="ChEBI" id="CHEBI:59789"/>
        <dbReference type="ChEBI" id="CHEBI:65314"/>
        <dbReference type="ChEBI" id="CHEBI:74486"/>
        <dbReference type="EC" id="2.1.1.177"/>
    </reaction>
</comment>
<comment type="subunit">
    <text evidence="1">Homodimer.</text>
</comment>
<comment type="subcellular location">
    <subcellularLocation>
        <location evidence="1">Cytoplasm</location>
    </subcellularLocation>
</comment>
<comment type="similarity">
    <text evidence="1">Belongs to the RNA methyltransferase RlmH family.</text>
</comment>
<proteinExistence type="inferred from homology"/>
<name>RLMH_MARSD</name>
<protein>
    <recommendedName>
        <fullName evidence="1">Ribosomal RNA large subunit methyltransferase H</fullName>
        <ecNumber evidence="1">2.1.1.177</ecNumber>
    </recommendedName>
    <alternativeName>
        <fullName evidence="1">23S rRNA (pseudouridine1915-N3)-methyltransferase</fullName>
    </alternativeName>
    <alternativeName>
        <fullName evidence="1">23S rRNA m3Psi1915 methyltransferase</fullName>
    </alternativeName>
    <alternativeName>
        <fullName evidence="1">rRNA (pseudouridine-N3-)-methyltransferase RlmH</fullName>
    </alternativeName>
</protein>
<keyword id="KW-0963">Cytoplasm</keyword>
<keyword id="KW-0489">Methyltransferase</keyword>
<keyword id="KW-1185">Reference proteome</keyword>
<keyword id="KW-0698">rRNA processing</keyword>
<keyword id="KW-0949">S-adenosyl-L-methionine</keyword>
<keyword id="KW-0808">Transferase</keyword>
<sequence length="156" mass="17736">MSKLQFVWVGKLKEPFFRDACAHYTKKLGRFHKLDETILKDAPGKLPPMDKVQHEGKAIMARIKPSDMLICLDEKGKEMTSVELSKHLQRWTEDPNLTPTFVIGGPFGLADEVKNAARVKLSLSKMTLPHELARTMLLEQLYRAASILRGSPYHHV</sequence>
<evidence type="ECO:0000255" key="1">
    <source>
        <dbReference type="HAMAP-Rule" id="MF_00658"/>
    </source>
</evidence>